<accession>A4IWD4</accession>
<proteinExistence type="inferred from homology"/>
<comment type="function">
    <text evidence="1">Participates in the translocation of lipoproteins from the inner membrane to the outer membrane. Only forms a complex with a lipoprotein if the residue after the N-terminal Cys is not an aspartate (The Asp acts as a targeting signal to indicate that the lipoprotein should stay in the inner membrane).</text>
</comment>
<comment type="subunit">
    <text evidence="1">Monomer.</text>
</comment>
<comment type="subcellular location">
    <subcellularLocation>
        <location evidence="1">Periplasm</location>
    </subcellularLocation>
</comment>
<comment type="similarity">
    <text evidence="1">Belongs to the LolA family.</text>
</comment>
<gene>
    <name evidence="1" type="primary">lolA</name>
    <name type="ordered locus">FTW_0278</name>
</gene>
<evidence type="ECO:0000255" key="1">
    <source>
        <dbReference type="HAMAP-Rule" id="MF_00240"/>
    </source>
</evidence>
<protein>
    <recommendedName>
        <fullName evidence="1">Outer-membrane lipoprotein carrier protein</fullName>
    </recommendedName>
</protein>
<reference key="1">
    <citation type="journal article" date="2007" name="PLoS ONE">
        <title>Complete genomic characterization of a pathogenic A.II strain of Francisella tularensis subspecies tularensis.</title>
        <authorList>
            <person name="Beckstrom-Sternberg S.M."/>
            <person name="Auerbach R.K."/>
            <person name="Godbole S."/>
            <person name="Pearson J.V."/>
            <person name="Beckstrom-Sternberg J.S."/>
            <person name="Deng Z."/>
            <person name="Munk C."/>
            <person name="Kubota K."/>
            <person name="Zhou Y."/>
            <person name="Bruce D."/>
            <person name="Noronha J."/>
            <person name="Scheuermann R.H."/>
            <person name="Wang A."/>
            <person name="Wei X."/>
            <person name="Wang J."/>
            <person name="Hao J."/>
            <person name="Wagner D.M."/>
            <person name="Brettin T.S."/>
            <person name="Brown N."/>
            <person name="Gilna P."/>
            <person name="Keim P.S."/>
        </authorList>
    </citation>
    <scope>NUCLEOTIDE SEQUENCE [LARGE SCALE GENOMIC DNA]</scope>
    <source>
        <strain>WY96-3418</strain>
    </source>
</reference>
<dbReference type="EMBL" id="CP000608">
    <property type="protein sequence ID" value="ABO46236.1"/>
    <property type="molecule type" value="Genomic_DNA"/>
</dbReference>
<dbReference type="RefSeq" id="WP_003017161.1">
    <property type="nucleotide sequence ID" value="NC_009257.1"/>
</dbReference>
<dbReference type="SMR" id="A4IWD4"/>
<dbReference type="KEGG" id="ftw:FTW_0278"/>
<dbReference type="HOGENOM" id="CLU_087560_0_0_6"/>
<dbReference type="GO" id="GO:0030288">
    <property type="term" value="C:outer membrane-bounded periplasmic space"/>
    <property type="evidence" value="ECO:0007669"/>
    <property type="project" value="TreeGrafter"/>
</dbReference>
<dbReference type="GO" id="GO:0044874">
    <property type="term" value="P:lipoprotein localization to outer membrane"/>
    <property type="evidence" value="ECO:0007669"/>
    <property type="project" value="UniProtKB-UniRule"/>
</dbReference>
<dbReference type="GO" id="GO:0042953">
    <property type="term" value="P:lipoprotein transport"/>
    <property type="evidence" value="ECO:0007669"/>
    <property type="project" value="InterPro"/>
</dbReference>
<dbReference type="CDD" id="cd16325">
    <property type="entry name" value="LolA"/>
    <property type="match status" value="1"/>
</dbReference>
<dbReference type="Gene3D" id="2.50.20.10">
    <property type="entry name" value="Lipoprotein localisation LolA/LolB/LppX"/>
    <property type="match status" value="1"/>
</dbReference>
<dbReference type="HAMAP" id="MF_00240">
    <property type="entry name" value="LolA"/>
    <property type="match status" value="1"/>
</dbReference>
<dbReference type="InterPro" id="IPR029046">
    <property type="entry name" value="LolA/LolB/LppX"/>
</dbReference>
<dbReference type="InterPro" id="IPR004564">
    <property type="entry name" value="OM_lipoprot_carrier_LolA-like"/>
</dbReference>
<dbReference type="InterPro" id="IPR018323">
    <property type="entry name" value="OM_lipoprot_carrier_LolA_Pbac"/>
</dbReference>
<dbReference type="NCBIfam" id="TIGR00547">
    <property type="entry name" value="lolA"/>
    <property type="match status" value="1"/>
</dbReference>
<dbReference type="PANTHER" id="PTHR35869">
    <property type="entry name" value="OUTER-MEMBRANE LIPOPROTEIN CARRIER PROTEIN"/>
    <property type="match status" value="1"/>
</dbReference>
<dbReference type="PANTHER" id="PTHR35869:SF1">
    <property type="entry name" value="OUTER-MEMBRANE LIPOPROTEIN CARRIER PROTEIN"/>
    <property type="match status" value="1"/>
</dbReference>
<dbReference type="Pfam" id="PF03548">
    <property type="entry name" value="LolA"/>
    <property type="match status" value="1"/>
</dbReference>
<dbReference type="SUPFAM" id="SSF89392">
    <property type="entry name" value="Prokaryotic lipoproteins and lipoprotein localization factors"/>
    <property type="match status" value="1"/>
</dbReference>
<sequence length="205" mass="23436">MKKIIICFIFVFSINVSFADATSELIDKIKNIHSMTANFNQKLIDGQTNNNLNSKGNMSLKKPQYFKWITTSPNNQEIVSNGTKLWIYDGDLDQLIIKKVSNDIAQFPYLILLSKNTNNINKLFTVTAQDNNSYILKPKNDQMIDSIKIKFTPNNQLEYLEISTSLNQFTKIEFNNVKTDVDISNTSFDFKAPQNTDIIDETKSA</sequence>
<keyword id="KW-0143">Chaperone</keyword>
<keyword id="KW-0574">Periplasm</keyword>
<keyword id="KW-0653">Protein transport</keyword>
<keyword id="KW-0732">Signal</keyword>
<keyword id="KW-0813">Transport</keyword>
<feature type="signal peptide" evidence="1">
    <location>
        <begin position="1"/>
        <end position="19"/>
    </location>
</feature>
<feature type="chain" id="PRO_1000071829" description="Outer-membrane lipoprotein carrier protein">
    <location>
        <begin position="20"/>
        <end position="205"/>
    </location>
</feature>
<organism>
    <name type="scientific">Francisella tularensis subsp. tularensis (strain WY96-3418)</name>
    <dbReference type="NCBI Taxonomy" id="418136"/>
    <lineage>
        <taxon>Bacteria</taxon>
        <taxon>Pseudomonadati</taxon>
        <taxon>Pseudomonadota</taxon>
        <taxon>Gammaproteobacteria</taxon>
        <taxon>Thiotrichales</taxon>
        <taxon>Francisellaceae</taxon>
        <taxon>Francisella</taxon>
    </lineage>
</organism>
<name>LOLA_FRATW</name>